<accession>A0PM72</accession>
<name>RS17_MYCUA</name>
<comment type="function">
    <text evidence="1">One of the primary rRNA binding proteins, it binds specifically to the 5'-end of 16S ribosomal RNA.</text>
</comment>
<comment type="subunit">
    <text evidence="1">Part of the 30S ribosomal subunit.</text>
</comment>
<comment type="similarity">
    <text evidence="1">Belongs to the universal ribosomal protein uS17 family.</text>
</comment>
<organism>
    <name type="scientific">Mycobacterium ulcerans (strain Agy99)</name>
    <dbReference type="NCBI Taxonomy" id="362242"/>
    <lineage>
        <taxon>Bacteria</taxon>
        <taxon>Bacillati</taxon>
        <taxon>Actinomycetota</taxon>
        <taxon>Actinomycetes</taxon>
        <taxon>Mycobacteriales</taxon>
        <taxon>Mycobacteriaceae</taxon>
        <taxon>Mycobacterium</taxon>
        <taxon>Mycobacterium ulcerans group</taxon>
    </lineage>
</organism>
<gene>
    <name evidence="1" type="primary">rpsQ</name>
    <name type="ordered locus">MUL_0799</name>
</gene>
<keyword id="KW-0687">Ribonucleoprotein</keyword>
<keyword id="KW-0689">Ribosomal protein</keyword>
<keyword id="KW-0694">RNA-binding</keyword>
<keyword id="KW-0699">rRNA-binding</keyword>
<proteinExistence type="inferred from homology"/>
<dbReference type="EMBL" id="CP000325">
    <property type="protein sequence ID" value="ABL03441.1"/>
    <property type="molecule type" value="Genomic_DNA"/>
</dbReference>
<dbReference type="SMR" id="A0PM72"/>
<dbReference type="KEGG" id="mul:MUL_0799"/>
<dbReference type="eggNOG" id="COG0186">
    <property type="taxonomic scope" value="Bacteria"/>
</dbReference>
<dbReference type="HOGENOM" id="CLU_073626_1_0_11"/>
<dbReference type="Proteomes" id="UP000000765">
    <property type="component" value="Chromosome"/>
</dbReference>
<dbReference type="GO" id="GO:0022627">
    <property type="term" value="C:cytosolic small ribosomal subunit"/>
    <property type="evidence" value="ECO:0007669"/>
    <property type="project" value="TreeGrafter"/>
</dbReference>
<dbReference type="GO" id="GO:0019843">
    <property type="term" value="F:rRNA binding"/>
    <property type="evidence" value="ECO:0007669"/>
    <property type="project" value="UniProtKB-UniRule"/>
</dbReference>
<dbReference type="GO" id="GO:0003735">
    <property type="term" value="F:structural constituent of ribosome"/>
    <property type="evidence" value="ECO:0007669"/>
    <property type="project" value="InterPro"/>
</dbReference>
<dbReference type="GO" id="GO:0006412">
    <property type="term" value="P:translation"/>
    <property type="evidence" value="ECO:0007669"/>
    <property type="project" value="UniProtKB-UniRule"/>
</dbReference>
<dbReference type="CDD" id="cd00364">
    <property type="entry name" value="Ribosomal_uS17"/>
    <property type="match status" value="1"/>
</dbReference>
<dbReference type="FunFam" id="2.40.50.140:FF:000026">
    <property type="entry name" value="30S ribosomal protein S17"/>
    <property type="match status" value="1"/>
</dbReference>
<dbReference type="Gene3D" id="2.40.50.140">
    <property type="entry name" value="Nucleic acid-binding proteins"/>
    <property type="match status" value="1"/>
</dbReference>
<dbReference type="HAMAP" id="MF_01345_B">
    <property type="entry name" value="Ribosomal_uS17_B"/>
    <property type="match status" value="1"/>
</dbReference>
<dbReference type="InterPro" id="IPR012340">
    <property type="entry name" value="NA-bd_OB-fold"/>
</dbReference>
<dbReference type="InterPro" id="IPR000266">
    <property type="entry name" value="Ribosomal_uS17"/>
</dbReference>
<dbReference type="InterPro" id="IPR019984">
    <property type="entry name" value="Ribosomal_uS17_bact/chlr"/>
</dbReference>
<dbReference type="InterPro" id="IPR019979">
    <property type="entry name" value="Ribosomal_uS17_CS"/>
</dbReference>
<dbReference type="NCBIfam" id="NF004123">
    <property type="entry name" value="PRK05610.1"/>
    <property type="match status" value="1"/>
</dbReference>
<dbReference type="NCBIfam" id="TIGR03635">
    <property type="entry name" value="uS17_bact"/>
    <property type="match status" value="1"/>
</dbReference>
<dbReference type="PANTHER" id="PTHR10744">
    <property type="entry name" value="40S RIBOSOMAL PROTEIN S11 FAMILY MEMBER"/>
    <property type="match status" value="1"/>
</dbReference>
<dbReference type="PANTHER" id="PTHR10744:SF1">
    <property type="entry name" value="SMALL RIBOSOMAL SUBUNIT PROTEIN US17M"/>
    <property type="match status" value="1"/>
</dbReference>
<dbReference type="Pfam" id="PF00366">
    <property type="entry name" value="Ribosomal_S17"/>
    <property type="match status" value="1"/>
</dbReference>
<dbReference type="PRINTS" id="PR00973">
    <property type="entry name" value="RIBOSOMALS17"/>
</dbReference>
<dbReference type="SUPFAM" id="SSF50249">
    <property type="entry name" value="Nucleic acid-binding proteins"/>
    <property type="match status" value="1"/>
</dbReference>
<dbReference type="PROSITE" id="PS00056">
    <property type="entry name" value="RIBOSOMAL_S17"/>
    <property type="match status" value="1"/>
</dbReference>
<evidence type="ECO:0000255" key="1">
    <source>
        <dbReference type="HAMAP-Rule" id="MF_01345"/>
    </source>
</evidence>
<evidence type="ECO:0000256" key="2">
    <source>
        <dbReference type="SAM" id="MobiDB-lite"/>
    </source>
</evidence>
<evidence type="ECO:0000305" key="3"/>
<feature type="chain" id="PRO_1000214792" description="Small ribosomal subunit protein uS17">
    <location>
        <begin position="1"/>
        <end position="120"/>
    </location>
</feature>
<feature type="region of interest" description="Disordered" evidence="2">
    <location>
        <begin position="1"/>
        <end position="46"/>
    </location>
</feature>
<feature type="compositionally biased region" description="Low complexity" evidence="2">
    <location>
        <begin position="1"/>
        <end position="22"/>
    </location>
</feature>
<reference key="1">
    <citation type="journal article" date="2007" name="Genome Res.">
        <title>Reductive evolution and niche adaptation inferred from the genome of Mycobacterium ulcerans, the causative agent of Buruli ulcer.</title>
        <authorList>
            <person name="Stinear T.P."/>
            <person name="Seemann T."/>
            <person name="Pidot S."/>
            <person name="Frigui W."/>
            <person name="Reysset G."/>
            <person name="Garnier T."/>
            <person name="Meurice G."/>
            <person name="Simon D."/>
            <person name="Bouchier C."/>
            <person name="Ma L."/>
            <person name="Tichit M."/>
            <person name="Porter J.L."/>
            <person name="Ryan J."/>
            <person name="Johnson P.D.R."/>
            <person name="Davies J.K."/>
            <person name="Jenkin G.A."/>
            <person name="Small P.L.C."/>
            <person name="Jones L.M."/>
            <person name="Tekaia F."/>
            <person name="Laval F."/>
            <person name="Daffe M."/>
            <person name="Parkhill J."/>
            <person name="Cole S.T."/>
        </authorList>
    </citation>
    <scope>NUCLEOTIDE SEQUENCE [LARGE SCALE GENOMIC DNA]</scope>
    <source>
        <strain>Agy99</strain>
    </source>
</reference>
<protein>
    <recommendedName>
        <fullName evidence="1">Small ribosomal subunit protein uS17</fullName>
    </recommendedName>
    <alternativeName>
        <fullName evidence="3">30S ribosomal protein S17</fullName>
    </alternativeName>
</protein>
<sequence length="120" mass="13126">MMAEAKTGAKATKSAAAGAADGASKEKGPKHTPSPPKPSGRRKTRIGYVVSDKMQKTIVVELEDRVRHPLYGKIIRTTKKVKVHDEHSAAGIGDRVSLMETRPLSATKRWRLVEILEKAK</sequence>